<comment type="function">
    <text evidence="1">Catalyzes the condensation of the acetyl group of acetyl-CoA with 3-methyl-2-oxobutanoate (2-ketoisovalerate) to form 3-carboxy-3-hydroxy-4-methylpentanoate (2-isopropylmalate).</text>
</comment>
<comment type="catalytic activity">
    <reaction evidence="1">
        <text>3-methyl-2-oxobutanoate + acetyl-CoA + H2O = (2S)-2-isopropylmalate + CoA + H(+)</text>
        <dbReference type="Rhea" id="RHEA:21524"/>
        <dbReference type="ChEBI" id="CHEBI:1178"/>
        <dbReference type="ChEBI" id="CHEBI:11851"/>
        <dbReference type="ChEBI" id="CHEBI:15377"/>
        <dbReference type="ChEBI" id="CHEBI:15378"/>
        <dbReference type="ChEBI" id="CHEBI:57287"/>
        <dbReference type="ChEBI" id="CHEBI:57288"/>
        <dbReference type="EC" id="2.3.3.13"/>
    </reaction>
</comment>
<comment type="cofactor">
    <cofactor evidence="1">
        <name>Mn(2+)</name>
        <dbReference type="ChEBI" id="CHEBI:29035"/>
    </cofactor>
</comment>
<comment type="pathway">
    <text evidence="1">Amino-acid biosynthesis; L-leucine biosynthesis; L-leucine from 3-methyl-2-oxobutanoate: step 1/4.</text>
</comment>
<comment type="subunit">
    <text evidence="1">Homodimer.</text>
</comment>
<comment type="subcellular location">
    <subcellularLocation>
        <location evidence="1">Cytoplasm</location>
    </subcellularLocation>
</comment>
<comment type="similarity">
    <text evidence="1">Belongs to the alpha-IPM synthase/homocitrate synthase family. LeuA type 1 subfamily.</text>
</comment>
<gene>
    <name evidence="1" type="primary">leuA</name>
    <name type="ordered locus">SaurJH1_2131</name>
</gene>
<protein>
    <recommendedName>
        <fullName evidence="1">2-isopropylmalate synthase</fullName>
        <ecNumber evidence="1">2.3.3.13</ecNumber>
    </recommendedName>
    <alternativeName>
        <fullName evidence="1">Alpha-IPM synthase</fullName>
    </alternativeName>
    <alternativeName>
        <fullName evidence="1">Alpha-isopropylmalate synthase</fullName>
    </alternativeName>
</protein>
<dbReference type="EC" id="2.3.3.13" evidence="1"/>
<dbReference type="EMBL" id="CP000736">
    <property type="protein sequence ID" value="ABR52960.1"/>
    <property type="molecule type" value="Genomic_DNA"/>
</dbReference>
<dbReference type="SMR" id="A6U3E2"/>
<dbReference type="KEGG" id="sah:SaurJH1_2131"/>
<dbReference type="HOGENOM" id="CLU_022158_0_1_9"/>
<dbReference type="UniPathway" id="UPA00048">
    <property type="reaction ID" value="UER00070"/>
</dbReference>
<dbReference type="GO" id="GO:0005737">
    <property type="term" value="C:cytoplasm"/>
    <property type="evidence" value="ECO:0007669"/>
    <property type="project" value="UniProtKB-SubCell"/>
</dbReference>
<dbReference type="GO" id="GO:0003852">
    <property type="term" value="F:2-isopropylmalate synthase activity"/>
    <property type="evidence" value="ECO:0007669"/>
    <property type="project" value="UniProtKB-UniRule"/>
</dbReference>
<dbReference type="GO" id="GO:0003985">
    <property type="term" value="F:acetyl-CoA C-acetyltransferase activity"/>
    <property type="evidence" value="ECO:0007669"/>
    <property type="project" value="UniProtKB-UniRule"/>
</dbReference>
<dbReference type="GO" id="GO:0030145">
    <property type="term" value="F:manganese ion binding"/>
    <property type="evidence" value="ECO:0007669"/>
    <property type="project" value="UniProtKB-UniRule"/>
</dbReference>
<dbReference type="GO" id="GO:0009098">
    <property type="term" value="P:L-leucine biosynthetic process"/>
    <property type="evidence" value="ECO:0007669"/>
    <property type="project" value="UniProtKB-UniRule"/>
</dbReference>
<dbReference type="CDD" id="cd07940">
    <property type="entry name" value="DRE_TIM_IPMS"/>
    <property type="match status" value="1"/>
</dbReference>
<dbReference type="FunFam" id="1.10.238.260:FF:000001">
    <property type="entry name" value="2-isopropylmalate synthase"/>
    <property type="match status" value="1"/>
</dbReference>
<dbReference type="FunFam" id="3.20.20.70:FF:000010">
    <property type="entry name" value="2-isopropylmalate synthase"/>
    <property type="match status" value="1"/>
</dbReference>
<dbReference type="FunFam" id="3.30.160.270:FF:000003">
    <property type="entry name" value="2-isopropylmalate synthase"/>
    <property type="match status" value="1"/>
</dbReference>
<dbReference type="Gene3D" id="1.10.238.260">
    <property type="match status" value="1"/>
</dbReference>
<dbReference type="Gene3D" id="3.30.160.270">
    <property type="match status" value="1"/>
</dbReference>
<dbReference type="Gene3D" id="3.20.20.70">
    <property type="entry name" value="Aldolase class I"/>
    <property type="match status" value="1"/>
</dbReference>
<dbReference type="HAMAP" id="MF_01025">
    <property type="entry name" value="LeuA_type1"/>
    <property type="match status" value="1"/>
</dbReference>
<dbReference type="InterPro" id="IPR050073">
    <property type="entry name" value="2-IPM_HCS-like"/>
</dbReference>
<dbReference type="InterPro" id="IPR013709">
    <property type="entry name" value="2-isopropylmalate_synth_dimer"/>
</dbReference>
<dbReference type="InterPro" id="IPR013785">
    <property type="entry name" value="Aldolase_TIM"/>
</dbReference>
<dbReference type="InterPro" id="IPR054691">
    <property type="entry name" value="LeuA/HCS_post-cat"/>
</dbReference>
<dbReference type="InterPro" id="IPR036230">
    <property type="entry name" value="LeuA_allosteric_dom_sf"/>
</dbReference>
<dbReference type="InterPro" id="IPR005671">
    <property type="entry name" value="LeuA_bact_synth"/>
</dbReference>
<dbReference type="InterPro" id="IPR000891">
    <property type="entry name" value="PYR_CT"/>
</dbReference>
<dbReference type="NCBIfam" id="TIGR00973">
    <property type="entry name" value="leuA_bact"/>
    <property type="match status" value="1"/>
</dbReference>
<dbReference type="NCBIfam" id="NF002086">
    <property type="entry name" value="PRK00915.1-3"/>
    <property type="match status" value="1"/>
</dbReference>
<dbReference type="NCBIfam" id="NF002088">
    <property type="entry name" value="PRK00915.1-5"/>
    <property type="match status" value="1"/>
</dbReference>
<dbReference type="PANTHER" id="PTHR10277:SF9">
    <property type="entry name" value="2-ISOPROPYLMALATE SYNTHASE 1, CHLOROPLASTIC-RELATED"/>
    <property type="match status" value="1"/>
</dbReference>
<dbReference type="PANTHER" id="PTHR10277">
    <property type="entry name" value="HOMOCITRATE SYNTHASE-RELATED"/>
    <property type="match status" value="1"/>
</dbReference>
<dbReference type="Pfam" id="PF22617">
    <property type="entry name" value="HCS_D2"/>
    <property type="match status" value="1"/>
</dbReference>
<dbReference type="Pfam" id="PF00682">
    <property type="entry name" value="HMGL-like"/>
    <property type="match status" value="1"/>
</dbReference>
<dbReference type="Pfam" id="PF08502">
    <property type="entry name" value="LeuA_dimer"/>
    <property type="match status" value="1"/>
</dbReference>
<dbReference type="SMART" id="SM00917">
    <property type="entry name" value="LeuA_dimer"/>
    <property type="match status" value="1"/>
</dbReference>
<dbReference type="SUPFAM" id="SSF110921">
    <property type="entry name" value="2-isopropylmalate synthase LeuA, allosteric (dimerisation) domain"/>
    <property type="match status" value="1"/>
</dbReference>
<dbReference type="SUPFAM" id="SSF51569">
    <property type="entry name" value="Aldolase"/>
    <property type="match status" value="1"/>
</dbReference>
<dbReference type="PROSITE" id="PS50991">
    <property type="entry name" value="PYR_CT"/>
    <property type="match status" value="1"/>
</dbReference>
<name>LEU1_STAA2</name>
<evidence type="ECO:0000255" key="1">
    <source>
        <dbReference type="HAMAP-Rule" id="MF_01025"/>
    </source>
</evidence>
<proteinExistence type="inferred from homology"/>
<reference key="1">
    <citation type="submission" date="2007-06" db="EMBL/GenBank/DDBJ databases">
        <title>Complete sequence of chromosome of Staphylococcus aureus subsp. aureus JH1.</title>
        <authorList>
            <consortium name="US DOE Joint Genome Institute"/>
            <person name="Copeland A."/>
            <person name="Lucas S."/>
            <person name="Lapidus A."/>
            <person name="Barry K."/>
            <person name="Detter J.C."/>
            <person name="Glavina del Rio T."/>
            <person name="Hammon N."/>
            <person name="Israni S."/>
            <person name="Dalin E."/>
            <person name="Tice H."/>
            <person name="Pitluck S."/>
            <person name="Chain P."/>
            <person name="Malfatti S."/>
            <person name="Shin M."/>
            <person name="Vergez L."/>
            <person name="Schmutz J."/>
            <person name="Larimer F."/>
            <person name="Land M."/>
            <person name="Hauser L."/>
            <person name="Kyrpides N."/>
            <person name="Ivanova N."/>
            <person name="Tomasz A."/>
            <person name="Richardson P."/>
        </authorList>
    </citation>
    <scope>NUCLEOTIDE SEQUENCE [LARGE SCALE GENOMIC DNA]</scope>
    <source>
        <strain>JH1</strain>
    </source>
</reference>
<keyword id="KW-0028">Amino-acid biosynthesis</keyword>
<keyword id="KW-0100">Branched-chain amino acid biosynthesis</keyword>
<keyword id="KW-0963">Cytoplasm</keyword>
<keyword id="KW-0432">Leucine biosynthesis</keyword>
<keyword id="KW-0464">Manganese</keyword>
<keyword id="KW-0479">Metal-binding</keyword>
<keyword id="KW-0808">Transferase</keyword>
<feature type="chain" id="PRO_1000149302" description="2-isopropylmalate synthase">
    <location>
        <begin position="1"/>
        <end position="509"/>
    </location>
</feature>
<feature type="domain" description="Pyruvate carboxyltransferase" evidence="1">
    <location>
        <begin position="5"/>
        <end position="267"/>
    </location>
</feature>
<feature type="region of interest" description="Regulatory domain" evidence="1">
    <location>
        <begin position="391"/>
        <end position="509"/>
    </location>
</feature>
<feature type="binding site" evidence="1">
    <location>
        <position position="14"/>
    </location>
    <ligand>
        <name>Mn(2+)</name>
        <dbReference type="ChEBI" id="CHEBI:29035"/>
    </ligand>
</feature>
<feature type="binding site" evidence="1">
    <location>
        <position position="202"/>
    </location>
    <ligand>
        <name>Mn(2+)</name>
        <dbReference type="ChEBI" id="CHEBI:29035"/>
    </ligand>
</feature>
<feature type="binding site" evidence="1">
    <location>
        <position position="204"/>
    </location>
    <ligand>
        <name>Mn(2+)</name>
        <dbReference type="ChEBI" id="CHEBI:29035"/>
    </ligand>
</feature>
<feature type="binding site" evidence="1">
    <location>
        <position position="238"/>
    </location>
    <ligand>
        <name>Mn(2+)</name>
        <dbReference type="ChEBI" id="CHEBI:29035"/>
    </ligand>
</feature>
<accession>A6U3E2</accession>
<organism>
    <name type="scientific">Staphylococcus aureus (strain JH1)</name>
    <dbReference type="NCBI Taxonomy" id="359787"/>
    <lineage>
        <taxon>Bacteria</taxon>
        <taxon>Bacillati</taxon>
        <taxon>Bacillota</taxon>
        <taxon>Bacilli</taxon>
        <taxon>Bacillales</taxon>
        <taxon>Staphylococcaceae</taxon>
        <taxon>Staphylococcus</taxon>
    </lineage>
</organism>
<sequence length="509" mass="55704">MSSHIQIFDTTLRDGEQTPGVNFTFDERLRIALQLEKWGVDVIEAGFPASSTGSFKSVQAIAQTLTTTAVCGLARCKKSDIDAVYEATKDAAKPVVHVFIATSPIHLEHKLKMSQEDVLASIKEHVTYAKQLFDVVQFSPEDATRTELPFLVKCVQTAVDAGATVINIPDTVGYSYHDEYAHIFKTLTESVTSSNEIIYSAHCHDDLGMAVSNSLAAIEGGARRIEGTVNGIGERAGNAALEEVALALYVRNDHYGAQTALNLEETKKTSDLISRYAGIRVPRNKAIVGQNAFSHESGIHQDGVLKHRETYEIMTPQLVGVSTTELPLGKLSGKHAFSEKLKALGYNIDKEAQIDLFKQFKTIADKKKSVSDRDIHAIIQGSEHEHQALYKLETLQLQYVSSGLQSAVVVVKDKEGHIYQDSSIGTGSIVAIYNAVDRIFQKETELIDYRINSVTEGTDAQAEVHVNLLIEGKTVNGFGIDHDILQASCKAYVEAHAKFAAENVEKVGN</sequence>